<organism>
    <name type="scientific">Nitratidesulfovibrio vulgaris (strain ATCC 29579 / DSM 644 / CCUG 34227 / NCIMB 8303 / VKM B-1760 / Hildenborough)</name>
    <name type="common">Desulfovibrio vulgaris</name>
    <dbReference type="NCBI Taxonomy" id="882"/>
    <lineage>
        <taxon>Bacteria</taxon>
        <taxon>Pseudomonadati</taxon>
        <taxon>Thermodesulfobacteriota</taxon>
        <taxon>Desulfovibrionia</taxon>
        <taxon>Desulfovibrionales</taxon>
        <taxon>Desulfovibrionaceae</taxon>
        <taxon>Nitratidesulfovibrio</taxon>
    </lineage>
</organism>
<keyword id="KW-0145">Chemotaxis</keyword>
<keyword id="KW-0378">Hydrolase</keyword>
<keyword id="KW-1185">Reference proteome</keyword>
<accession>Q726Y4</accession>
<name>CHED_NITV2</name>
<sequence>MRDAVRAKTNRRSVAGMPAELMDLDLRHLHLRIGEGILAARPALIATVLGSCVSVTFHHPSTETGGIFHAMLPTVLGAADGARTPCKYVDAAIETLLGQFARRGIAANDLVVKLFGGAFTMNPEEKQRLRCIVDVGGRNVEVARATLQRFGIEPQSEHILGDRGRKLFFHSGTGEVWVRLLRRTEPPLPSALVCRDDLT</sequence>
<protein>
    <recommendedName>
        <fullName evidence="1">Probable chemoreceptor glutamine deamidase CheD</fullName>
        <ecNumber evidence="1">3.5.1.44</ecNumber>
    </recommendedName>
</protein>
<reference key="1">
    <citation type="journal article" date="2004" name="Nat. Biotechnol.">
        <title>The genome sequence of the anaerobic, sulfate-reducing bacterium Desulfovibrio vulgaris Hildenborough.</title>
        <authorList>
            <person name="Heidelberg J.F."/>
            <person name="Seshadri R."/>
            <person name="Haveman S.A."/>
            <person name="Hemme C.L."/>
            <person name="Paulsen I.T."/>
            <person name="Kolonay J.F."/>
            <person name="Eisen J.A."/>
            <person name="Ward N.L."/>
            <person name="Methe B.A."/>
            <person name="Brinkac L.M."/>
            <person name="Daugherty S.C."/>
            <person name="DeBoy R.T."/>
            <person name="Dodson R.J."/>
            <person name="Durkin A.S."/>
            <person name="Madupu R."/>
            <person name="Nelson W.C."/>
            <person name="Sullivan S.A."/>
            <person name="Fouts D.E."/>
            <person name="Haft D.H."/>
            <person name="Selengut J."/>
            <person name="Peterson J.D."/>
            <person name="Davidsen T.M."/>
            <person name="Zafar N."/>
            <person name="Zhou L."/>
            <person name="Radune D."/>
            <person name="Dimitrov G."/>
            <person name="Hance M."/>
            <person name="Tran K."/>
            <person name="Khouri H.M."/>
            <person name="Gill J."/>
            <person name="Utterback T.R."/>
            <person name="Feldblyum T.V."/>
            <person name="Wall J.D."/>
            <person name="Voordouw G."/>
            <person name="Fraser C.M."/>
        </authorList>
    </citation>
    <scope>NUCLEOTIDE SEQUENCE [LARGE SCALE GENOMIC DNA]</scope>
    <source>
        <strain>ATCC 29579 / DSM 644 / CCUG 34227 / NCIMB 8303 / VKM B-1760 / Hildenborough</strain>
    </source>
</reference>
<evidence type="ECO:0000255" key="1">
    <source>
        <dbReference type="HAMAP-Rule" id="MF_01440"/>
    </source>
</evidence>
<dbReference type="EC" id="3.5.1.44" evidence="1"/>
<dbReference type="EMBL" id="AE017285">
    <property type="protein sequence ID" value="AAS97443.1"/>
    <property type="molecule type" value="Genomic_DNA"/>
</dbReference>
<dbReference type="RefSeq" id="YP_012183.1">
    <property type="nucleotide sequence ID" value="NC_002937.3"/>
</dbReference>
<dbReference type="SMR" id="Q726Y4"/>
<dbReference type="STRING" id="882.DVU_2972"/>
<dbReference type="PaxDb" id="882-DVU_2972"/>
<dbReference type="EnsemblBacteria" id="AAS97443">
    <property type="protein sequence ID" value="AAS97443"/>
    <property type="gene ID" value="DVU_2972"/>
</dbReference>
<dbReference type="KEGG" id="dvu:DVU_2972"/>
<dbReference type="PATRIC" id="fig|882.5.peg.2691"/>
<dbReference type="eggNOG" id="COG1871">
    <property type="taxonomic scope" value="Bacteria"/>
</dbReference>
<dbReference type="HOGENOM" id="CLU_087854_1_0_7"/>
<dbReference type="OrthoDB" id="9807202at2"/>
<dbReference type="PhylomeDB" id="Q726Y4"/>
<dbReference type="Proteomes" id="UP000002194">
    <property type="component" value="Chromosome"/>
</dbReference>
<dbReference type="GO" id="GO:0050568">
    <property type="term" value="F:protein-glutamine glutaminase activity"/>
    <property type="evidence" value="ECO:0007669"/>
    <property type="project" value="UniProtKB-UniRule"/>
</dbReference>
<dbReference type="GO" id="GO:0006935">
    <property type="term" value="P:chemotaxis"/>
    <property type="evidence" value="ECO:0007669"/>
    <property type="project" value="UniProtKB-UniRule"/>
</dbReference>
<dbReference type="CDD" id="cd16352">
    <property type="entry name" value="CheD"/>
    <property type="match status" value="1"/>
</dbReference>
<dbReference type="Gene3D" id="3.30.1330.200">
    <property type="match status" value="1"/>
</dbReference>
<dbReference type="HAMAP" id="MF_01440">
    <property type="entry name" value="CheD"/>
    <property type="match status" value="1"/>
</dbReference>
<dbReference type="InterPro" id="IPR038592">
    <property type="entry name" value="CheD-like_sf"/>
</dbReference>
<dbReference type="InterPro" id="IPR005659">
    <property type="entry name" value="Chemorcpt_Glu_NH3ase_CheD"/>
</dbReference>
<dbReference type="InterPro" id="IPR011324">
    <property type="entry name" value="Cytotoxic_necrot_fac-like_cat"/>
</dbReference>
<dbReference type="PANTHER" id="PTHR35147">
    <property type="entry name" value="CHEMORECEPTOR GLUTAMINE DEAMIDASE CHED-RELATED"/>
    <property type="match status" value="1"/>
</dbReference>
<dbReference type="PANTHER" id="PTHR35147:SF1">
    <property type="entry name" value="CHEMORECEPTOR GLUTAMINE DEAMIDASE CHED-RELATED"/>
    <property type="match status" value="1"/>
</dbReference>
<dbReference type="Pfam" id="PF03975">
    <property type="entry name" value="CheD"/>
    <property type="match status" value="1"/>
</dbReference>
<dbReference type="SUPFAM" id="SSF64438">
    <property type="entry name" value="CNF1/YfiH-like putative cysteine hydrolases"/>
    <property type="match status" value="1"/>
</dbReference>
<gene>
    <name evidence="1" type="primary">cheD</name>
    <name type="ordered locus">DVU_2972</name>
</gene>
<proteinExistence type="inferred from homology"/>
<feature type="chain" id="PRO_0000251031" description="Probable chemoreceptor glutamine deamidase CheD">
    <location>
        <begin position="1"/>
        <end position="199"/>
    </location>
</feature>
<comment type="function">
    <text evidence="1">Probably deamidates glutamine residues to glutamate on methyl-accepting chemotaxis receptors (MCPs), playing an important role in chemotaxis.</text>
</comment>
<comment type="catalytic activity">
    <reaction evidence="1">
        <text>L-glutaminyl-[protein] + H2O = L-glutamyl-[protein] + NH4(+)</text>
        <dbReference type="Rhea" id="RHEA:16441"/>
        <dbReference type="Rhea" id="RHEA-COMP:10207"/>
        <dbReference type="Rhea" id="RHEA-COMP:10208"/>
        <dbReference type="ChEBI" id="CHEBI:15377"/>
        <dbReference type="ChEBI" id="CHEBI:28938"/>
        <dbReference type="ChEBI" id="CHEBI:29973"/>
        <dbReference type="ChEBI" id="CHEBI:30011"/>
        <dbReference type="EC" id="3.5.1.44"/>
    </reaction>
</comment>
<comment type="similarity">
    <text evidence="1">Belongs to the CheD family.</text>
</comment>